<evidence type="ECO:0000269" key="1">
    <source ref="2"/>
</evidence>
<evidence type="ECO:0000305" key="2"/>
<gene>
    <name type="primary">rpsB</name>
    <name type="ordered locus">M6_Spy1779</name>
</gene>
<feature type="initiator methionine" description="Removed" evidence="1">
    <location>
        <position position="1"/>
    </location>
</feature>
<feature type="chain" id="PRO_0000134255" description="Small ribosomal subunit protein uS2">
    <location>
        <begin position="2"/>
        <end position="255"/>
    </location>
</feature>
<comment type="similarity">
    <text evidence="2">Belongs to the universal ribosomal protein uS2 family.</text>
</comment>
<accession>Q5X9J9</accession>
<accession>P82483</accession>
<keyword id="KW-0903">Direct protein sequencing</keyword>
<keyword id="KW-0687">Ribonucleoprotein</keyword>
<keyword id="KW-0689">Ribosomal protein</keyword>
<organism>
    <name type="scientific">Streptococcus pyogenes serotype M6 (strain ATCC BAA-946 / MGAS10394)</name>
    <dbReference type="NCBI Taxonomy" id="286636"/>
    <lineage>
        <taxon>Bacteria</taxon>
        <taxon>Bacillati</taxon>
        <taxon>Bacillota</taxon>
        <taxon>Bacilli</taxon>
        <taxon>Lactobacillales</taxon>
        <taxon>Streptococcaceae</taxon>
        <taxon>Streptococcus</taxon>
    </lineage>
</organism>
<reference key="1">
    <citation type="journal article" date="2004" name="J. Infect. Dis.">
        <title>Progress toward characterization of the group A Streptococcus metagenome: complete genome sequence of a macrolide-resistant serotype M6 strain.</title>
        <authorList>
            <person name="Banks D.J."/>
            <person name="Porcella S.F."/>
            <person name="Barbian K.D."/>
            <person name="Beres S.B."/>
            <person name="Philips L.E."/>
            <person name="Voyich J.M."/>
            <person name="DeLeo F.R."/>
            <person name="Martin J.M."/>
            <person name="Somerville G.A."/>
            <person name="Musser J.M."/>
        </authorList>
    </citation>
    <scope>NUCLEOTIDE SEQUENCE [LARGE SCALE GENOMIC DNA]</scope>
    <source>
        <strain>ATCC BAA-946 / MGAS10394</strain>
    </source>
</reference>
<reference key="2">
    <citation type="submission" date="2000-05" db="UniProtKB">
        <title>Two-dimensional gel electrophoresis map of Streptococcus pyogenes proteins.</title>
        <authorList>
            <person name="Hogan D.A."/>
            <person name="Du P."/>
            <person name="Stevenson T.I."/>
            <person name="Whitton M."/>
            <person name="Kilby G.W."/>
            <person name="Rogers J."/>
            <person name="VanBogelen R.A."/>
        </authorList>
    </citation>
    <scope>PROTEIN SEQUENCE OF 2-26; 30-58; 87-113; 119-131; 133-139; 142-174; 179-208 AND 217-225</scope>
    <scope>IDENTIFICATION BY MASS SPECTROMETRY</scope>
    <source>
        <strain>JRS4 / Serotype M6</strain>
    </source>
</reference>
<sequence length="255" mass="28386">MAVISMKQLLEAGVHFGHQTRRWNPKMAKYIFTERNGIHVIDLQQTVKLADQAYEFVRDAAANDAVILFVGTKKQAAEAVADEATRAGQYFINHRWLGGTLTNWGTIQKRIARLKEIKRMEEEGTFDVLPKKEVALLNKQRARLEKFLGGIEDMPRIPDVMYVVDPHKEQIAVKEAKKLGIPVVAMVDTNADPDDIDIIIPANDDAIRAVKLITAKLADAIIEGRQGEDADVAFEADTQADSIEDIVEVVEGDNA</sequence>
<name>RS2_STRP6</name>
<protein>
    <recommendedName>
        <fullName evidence="2">Small ribosomal subunit protein uS2</fullName>
    </recommendedName>
    <alternativeName>
        <fullName>30S ribosomal protein S2</fullName>
    </alternativeName>
</protein>
<proteinExistence type="evidence at protein level"/>
<dbReference type="EMBL" id="CP000003">
    <property type="protein sequence ID" value="AAT87914.1"/>
    <property type="molecule type" value="Genomic_DNA"/>
</dbReference>
<dbReference type="RefSeq" id="WP_011055079.1">
    <property type="nucleotide sequence ID" value="NC_006086.1"/>
</dbReference>
<dbReference type="SMR" id="Q5X9J9"/>
<dbReference type="KEGG" id="spa:M6_Spy1779"/>
<dbReference type="HOGENOM" id="CLU_040318_1_2_9"/>
<dbReference type="Proteomes" id="UP000001167">
    <property type="component" value="Chromosome"/>
</dbReference>
<dbReference type="GO" id="GO:0022627">
    <property type="term" value="C:cytosolic small ribosomal subunit"/>
    <property type="evidence" value="ECO:0007669"/>
    <property type="project" value="TreeGrafter"/>
</dbReference>
<dbReference type="GO" id="GO:0003735">
    <property type="term" value="F:structural constituent of ribosome"/>
    <property type="evidence" value="ECO:0007669"/>
    <property type="project" value="InterPro"/>
</dbReference>
<dbReference type="GO" id="GO:0006412">
    <property type="term" value="P:translation"/>
    <property type="evidence" value="ECO:0007669"/>
    <property type="project" value="UniProtKB-UniRule"/>
</dbReference>
<dbReference type="CDD" id="cd01425">
    <property type="entry name" value="RPS2"/>
    <property type="match status" value="1"/>
</dbReference>
<dbReference type="FunFam" id="1.10.287.610:FF:000001">
    <property type="entry name" value="30S ribosomal protein S2"/>
    <property type="match status" value="1"/>
</dbReference>
<dbReference type="Gene3D" id="3.40.50.10490">
    <property type="entry name" value="Glucose-6-phosphate isomerase like protein, domain 1"/>
    <property type="match status" value="1"/>
</dbReference>
<dbReference type="Gene3D" id="1.10.287.610">
    <property type="entry name" value="Helix hairpin bin"/>
    <property type="match status" value="1"/>
</dbReference>
<dbReference type="HAMAP" id="MF_00291_B">
    <property type="entry name" value="Ribosomal_uS2_B"/>
    <property type="match status" value="1"/>
</dbReference>
<dbReference type="InterPro" id="IPR001865">
    <property type="entry name" value="Ribosomal_uS2"/>
</dbReference>
<dbReference type="InterPro" id="IPR005706">
    <property type="entry name" value="Ribosomal_uS2_bac/mit/plastid"/>
</dbReference>
<dbReference type="InterPro" id="IPR018130">
    <property type="entry name" value="Ribosomal_uS2_CS"/>
</dbReference>
<dbReference type="InterPro" id="IPR023591">
    <property type="entry name" value="Ribosomal_uS2_flav_dom_sf"/>
</dbReference>
<dbReference type="NCBIfam" id="TIGR01011">
    <property type="entry name" value="rpsB_bact"/>
    <property type="match status" value="1"/>
</dbReference>
<dbReference type="PANTHER" id="PTHR12534">
    <property type="entry name" value="30S RIBOSOMAL PROTEIN S2 PROKARYOTIC AND ORGANELLAR"/>
    <property type="match status" value="1"/>
</dbReference>
<dbReference type="PANTHER" id="PTHR12534:SF0">
    <property type="entry name" value="SMALL RIBOSOMAL SUBUNIT PROTEIN US2M"/>
    <property type="match status" value="1"/>
</dbReference>
<dbReference type="Pfam" id="PF00318">
    <property type="entry name" value="Ribosomal_S2"/>
    <property type="match status" value="1"/>
</dbReference>
<dbReference type="PRINTS" id="PR00395">
    <property type="entry name" value="RIBOSOMALS2"/>
</dbReference>
<dbReference type="SUPFAM" id="SSF52313">
    <property type="entry name" value="Ribosomal protein S2"/>
    <property type="match status" value="1"/>
</dbReference>
<dbReference type="PROSITE" id="PS00962">
    <property type="entry name" value="RIBOSOMAL_S2_1"/>
    <property type="match status" value="1"/>
</dbReference>